<protein>
    <recommendedName>
        <fullName>3-ketoacyl-CoA thiolase 2, peroxisomal</fullName>
        <ecNumber evidence="5">2.3.1.16</ecNumber>
    </recommendedName>
    <alternativeName>
        <fullName>Acetyl-CoA acyltransferase 2</fullName>
    </alternativeName>
    <alternativeName>
        <fullName>Beta-ketothiolase 2</fullName>
    </alternativeName>
    <alternativeName>
        <fullName>Peroxisomal 3-oxoacyl-CoA thiolase 2</fullName>
    </alternativeName>
    <alternativeName>
        <fullName>Peroxisome defective protein 1</fullName>
    </alternativeName>
</protein>
<accession>Q56WD9</accession>
<accession>Q93Z35</accession>
<accession>Q9S7M3</accession>
<organism>
    <name type="scientific">Arabidopsis thaliana</name>
    <name type="common">Mouse-ear cress</name>
    <dbReference type="NCBI Taxonomy" id="3702"/>
    <lineage>
        <taxon>Eukaryota</taxon>
        <taxon>Viridiplantae</taxon>
        <taxon>Streptophyta</taxon>
        <taxon>Embryophyta</taxon>
        <taxon>Tracheophyta</taxon>
        <taxon>Spermatophyta</taxon>
        <taxon>Magnoliopsida</taxon>
        <taxon>eudicotyledons</taxon>
        <taxon>Gunneridae</taxon>
        <taxon>Pentapetalae</taxon>
        <taxon>rosids</taxon>
        <taxon>malvids</taxon>
        <taxon>Brassicales</taxon>
        <taxon>Brassicaceae</taxon>
        <taxon>Camelineae</taxon>
        <taxon>Arabidopsis</taxon>
    </lineage>
</organism>
<dbReference type="EC" id="2.3.1.16" evidence="5"/>
<dbReference type="EMBL" id="AB008854">
    <property type="protein sequence ID" value="BAA25248.1"/>
    <property type="molecule type" value="mRNA"/>
</dbReference>
<dbReference type="EMBL" id="AB008855">
    <property type="protein sequence ID" value="BAA25249.1"/>
    <property type="molecule type" value="Genomic_DNA"/>
</dbReference>
<dbReference type="EMBL" id="AC002334">
    <property type="protein sequence ID" value="AAC04908.1"/>
    <property type="molecule type" value="Genomic_DNA"/>
</dbReference>
<dbReference type="EMBL" id="CP002685">
    <property type="protein sequence ID" value="AEC08791.1"/>
    <property type="molecule type" value="Genomic_DNA"/>
</dbReference>
<dbReference type="EMBL" id="AY058176">
    <property type="protein sequence ID" value="AAL25590.1"/>
    <property type="status" value="ALT_FRAME"/>
    <property type="molecule type" value="mRNA"/>
</dbReference>
<dbReference type="EMBL" id="AF327529">
    <property type="protein sequence ID" value="AAG42910.1"/>
    <property type="molecule type" value="mRNA"/>
</dbReference>
<dbReference type="EMBL" id="AF349530">
    <property type="protein sequence ID" value="AAK15577.1"/>
    <property type="molecule type" value="mRNA"/>
</dbReference>
<dbReference type="EMBL" id="AY052702">
    <property type="protein sequence ID" value="AAK96606.1"/>
    <property type="molecule type" value="mRNA"/>
</dbReference>
<dbReference type="EMBL" id="AY063720">
    <property type="protein sequence ID" value="AAL36070.1"/>
    <property type="molecule type" value="mRNA"/>
</dbReference>
<dbReference type="EMBL" id="AY087543">
    <property type="protein sequence ID" value="AAM65085.1"/>
    <property type="molecule type" value="mRNA"/>
</dbReference>
<dbReference type="EMBL" id="AK222103">
    <property type="protein sequence ID" value="BAD95031.1"/>
    <property type="molecule type" value="mRNA"/>
</dbReference>
<dbReference type="PIR" id="T52110">
    <property type="entry name" value="T52110"/>
</dbReference>
<dbReference type="RefSeq" id="NP_180873.1">
    <property type="nucleotide sequence ID" value="NM_128874.4"/>
</dbReference>
<dbReference type="PDB" id="2C7Y">
    <property type="method" value="X-ray"/>
    <property type="resolution" value="2.10 A"/>
    <property type="chains" value="A/B=38-441"/>
</dbReference>
<dbReference type="PDB" id="2C7Z">
    <property type="method" value="X-ray"/>
    <property type="resolution" value="2.37 A"/>
    <property type="chains" value="A=38-441"/>
</dbReference>
<dbReference type="PDB" id="2WU9">
    <property type="method" value="X-ray"/>
    <property type="resolution" value="1.50 A"/>
    <property type="chains" value="A/B=36-462"/>
</dbReference>
<dbReference type="PDBsum" id="2C7Y"/>
<dbReference type="PDBsum" id="2C7Z"/>
<dbReference type="PDBsum" id="2WU9"/>
<dbReference type="SMR" id="Q56WD9"/>
<dbReference type="BioGRID" id="3223">
    <property type="interactions" value="24"/>
</dbReference>
<dbReference type="FunCoup" id="Q56WD9">
    <property type="interactions" value="2195"/>
</dbReference>
<dbReference type="IntAct" id="Q56WD9">
    <property type="interactions" value="5"/>
</dbReference>
<dbReference type="MINT" id="Q56WD9"/>
<dbReference type="STRING" id="3702.Q56WD9"/>
<dbReference type="MetOSite" id="Q56WD9"/>
<dbReference type="PaxDb" id="3702-AT2G33150.1"/>
<dbReference type="ProteomicsDB" id="234272"/>
<dbReference type="EnsemblPlants" id="AT2G33150.1">
    <property type="protein sequence ID" value="AT2G33150.1"/>
    <property type="gene ID" value="AT2G33150"/>
</dbReference>
<dbReference type="GeneID" id="817876"/>
<dbReference type="Gramene" id="AT2G33150.1">
    <property type="protein sequence ID" value="AT2G33150.1"/>
    <property type="gene ID" value="AT2G33150"/>
</dbReference>
<dbReference type="KEGG" id="ath:AT2G33150"/>
<dbReference type="Araport" id="AT2G33150"/>
<dbReference type="TAIR" id="AT2G33150">
    <property type="gene designation" value="PKT3"/>
</dbReference>
<dbReference type="eggNOG" id="KOG1389">
    <property type="taxonomic scope" value="Eukaryota"/>
</dbReference>
<dbReference type="HOGENOM" id="CLU_031026_1_1_1"/>
<dbReference type="InParanoid" id="Q56WD9"/>
<dbReference type="OMA" id="RWCASSM"/>
<dbReference type="OrthoDB" id="5404651at2759"/>
<dbReference type="PhylomeDB" id="Q56WD9"/>
<dbReference type="BioCyc" id="MetaCyc:AT2G33150-MONOMER"/>
<dbReference type="BRENDA" id="2.3.1.16">
    <property type="organism ID" value="399"/>
</dbReference>
<dbReference type="SABIO-RK" id="Q56WD9"/>
<dbReference type="UniPathway" id="UPA00199"/>
<dbReference type="CD-CODE" id="4299E36E">
    <property type="entry name" value="Nucleolus"/>
</dbReference>
<dbReference type="EvolutionaryTrace" id="Q56WD9"/>
<dbReference type="PRO" id="PR:Q56WD9"/>
<dbReference type="Proteomes" id="UP000006548">
    <property type="component" value="Chromosome 2"/>
</dbReference>
<dbReference type="ExpressionAtlas" id="Q56WD9">
    <property type="expression patterns" value="baseline and differential"/>
</dbReference>
<dbReference type="GO" id="GO:0005783">
    <property type="term" value="C:endoplasmic reticulum"/>
    <property type="evidence" value="ECO:0007005"/>
    <property type="project" value="TAIR"/>
</dbReference>
<dbReference type="GO" id="GO:0009514">
    <property type="term" value="C:glyoxysome"/>
    <property type="evidence" value="ECO:0007669"/>
    <property type="project" value="UniProtKB-SubCell"/>
</dbReference>
<dbReference type="GO" id="GO:0005739">
    <property type="term" value="C:mitochondrion"/>
    <property type="evidence" value="ECO:0000314"/>
    <property type="project" value="TAIR"/>
</dbReference>
<dbReference type="GO" id="GO:0005730">
    <property type="term" value="C:nucleolus"/>
    <property type="evidence" value="ECO:0007005"/>
    <property type="project" value="TAIR"/>
</dbReference>
<dbReference type="GO" id="GO:0005777">
    <property type="term" value="C:peroxisome"/>
    <property type="evidence" value="ECO:0000314"/>
    <property type="project" value="TAIR"/>
</dbReference>
<dbReference type="GO" id="GO:0000325">
    <property type="term" value="C:plant-type vacuole"/>
    <property type="evidence" value="ECO:0007005"/>
    <property type="project" value="TAIR"/>
</dbReference>
<dbReference type="GO" id="GO:0003988">
    <property type="term" value="F:acetyl-CoA C-acyltransferase activity"/>
    <property type="evidence" value="ECO:0000314"/>
    <property type="project" value="TAIR"/>
</dbReference>
<dbReference type="GO" id="GO:0006635">
    <property type="term" value="P:fatty acid beta-oxidation"/>
    <property type="evidence" value="ECO:0000304"/>
    <property type="project" value="TAIR"/>
</dbReference>
<dbReference type="GO" id="GO:0010111">
    <property type="term" value="P:glyoxysome organization"/>
    <property type="evidence" value="ECO:0000315"/>
    <property type="project" value="TAIR"/>
</dbReference>
<dbReference type="GO" id="GO:0009695">
    <property type="term" value="P:jasmonic acid biosynthetic process"/>
    <property type="evidence" value="ECO:0000303"/>
    <property type="project" value="TAIR"/>
</dbReference>
<dbReference type="GO" id="GO:0031408">
    <property type="term" value="P:oxylipin biosynthetic process"/>
    <property type="evidence" value="ECO:0007669"/>
    <property type="project" value="UniProtKB-KW"/>
</dbReference>
<dbReference type="GO" id="GO:0009789">
    <property type="term" value="P:positive regulation of abscisic acid-activated signaling pathway"/>
    <property type="evidence" value="ECO:0000315"/>
    <property type="project" value="TAIR"/>
</dbReference>
<dbReference type="GO" id="GO:0009611">
    <property type="term" value="P:response to wounding"/>
    <property type="evidence" value="ECO:0000303"/>
    <property type="project" value="TAIR"/>
</dbReference>
<dbReference type="CDD" id="cd00751">
    <property type="entry name" value="thiolase"/>
    <property type="match status" value="1"/>
</dbReference>
<dbReference type="FunFam" id="3.40.47.10:FF:000032">
    <property type="entry name" value="Peroxisomal 3-ketoacyl-CoA thiolase"/>
    <property type="match status" value="1"/>
</dbReference>
<dbReference type="Gene3D" id="3.40.47.10">
    <property type="match status" value="1"/>
</dbReference>
<dbReference type="InterPro" id="IPR002155">
    <property type="entry name" value="Thiolase"/>
</dbReference>
<dbReference type="InterPro" id="IPR016039">
    <property type="entry name" value="Thiolase-like"/>
</dbReference>
<dbReference type="InterPro" id="IPR050215">
    <property type="entry name" value="Thiolase-like_sf_Thiolase"/>
</dbReference>
<dbReference type="InterPro" id="IPR020615">
    <property type="entry name" value="Thiolase_acyl_enz_int_AS"/>
</dbReference>
<dbReference type="InterPro" id="IPR020610">
    <property type="entry name" value="Thiolase_AS"/>
</dbReference>
<dbReference type="InterPro" id="IPR020617">
    <property type="entry name" value="Thiolase_C"/>
</dbReference>
<dbReference type="InterPro" id="IPR020613">
    <property type="entry name" value="Thiolase_CS"/>
</dbReference>
<dbReference type="InterPro" id="IPR020616">
    <property type="entry name" value="Thiolase_N"/>
</dbReference>
<dbReference type="NCBIfam" id="TIGR01930">
    <property type="entry name" value="AcCoA-C-Actrans"/>
    <property type="match status" value="1"/>
</dbReference>
<dbReference type="PANTHER" id="PTHR43853">
    <property type="entry name" value="3-KETOACYL-COA THIOLASE, PEROXISOMAL"/>
    <property type="match status" value="1"/>
</dbReference>
<dbReference type="PANTHER" id="PTHR43853:SF8">
    <property type="entry name" value="3-KETOACYL-COA THIOLASE, PEROXISOMAL"/>
    <property type="match status" value="1"/>
</dbReference>
<dbReference type="Pfam" id="PF02803">
    <property type="entry name" value="Thiolase_C"/>
    <property type="match status" value="1"/>
</dbReference>
<dbReference type="Pfam" id="PF00108">
    <property type="entry name" value="Thiolase_N"/>
    <property type="match status" value="1"/>
</dbReference>
<dbReference type="SUPFAM" id="SSF53901">
    <property type="entry name" value="Thiolase-like"/>
    <property type="match status" value="2"/>
</dbReference>
<dbReference type="PROSITE" id="PS00098">
    <property type="entry name" value="THIOLASE_1"/>
    <property type="match status" value="1"/>
</dbReference>
<dbReference type="PROSITE" id="PS00737">
    <property type="entry name" value="THIOLASE_2"/>
    <property type="match status" value="1"/>
</dbReference>
<dbReference type="PROSITE" id="PS00099">
    <property type="entry name" value="THIOLASE_3"/>
    <property type="match status" value="1"/>
</dbReference>
<sequence length="462" mass="48579">MEKAIERQRVLLEHLRPSSSSSHNYEASLSASACLAGDSAAYQRTSLYGDDVVIVAAHRTPLCKSKRGNFKDTYPDDLLAPVLRALIEKTNLNPSEVGDIVVGTVLAPGSQRASECRMAAFYAGFPETVAVRTVNRQCSSGLQAVADVAAAIKAGFYDIGIGAGLESMTTNPMAWEGSVNPAVKKFAQAQNCLLPMGVTSENVAQRFGVSRQEQDQAAVDSHRKAAAATAAGKFKDEIIPVKTKLVDPKTGDEKPITVSVDDGIRPTTTLASLGKLKPVFKKDGTTTAGNSSQVSDGAGAVLLMKRSVAMQKGLPVLGVFRTFAAVGVDPAIMGIGPAVAIPAAVKAAGLELDDIDLFEINEAFASQFVYCRNKLGLDPEKINVNGGAMAIGHPLGATGARCVATLLHEMKRRGKDCRFGVVSMCIGTGMGAAAVFERGDGVDELRNARKVEAQGLLSKDAR</sequence>
<name>THIK2_ARATH</name>
<proteinExistence type="evidence at protein level"/>
<gene>
    <name type="primary">PED1</name>
    <name type="synonym">KAT2</name>
    <name type="ordered locus">At2g33150</name>
    <name type="ORF">F25I18.11</name>
</gene>
<keyword id="KW-0002">3D-structure</keyword>
<keyword id="KW-0012">Acyltransferase</keyword>
<keyword id="KW-1015">Disulfide bond</keyword>
<keyword id="KW-0275">Fatty acid biosynthesis</keyword>
<keyword id="KW-0276">Fatty acid metabolism</keyword>
<keyword id="KW-0330">Glyoxysome</keyword>
<keyword id="KW-0444">Lipid biosynthesis</keyword>
<keyword id="KW-0443">Lipid metabolism</keyword>
<keyword id="KW-0925">Oxylipin biosynthesis</keyword>
<keyword id="KW-0576">Peroxisome</keyword>
<keyword id="KW-1185">Reference proteome</keyword>
<keyword id="KW-0808">Transferase</keyword>
<keyword id="KW-0809">Transit peptide</keyword>
<feature type="transit peptide" description="Peroxisome" evidence="16">
    <location>
        <begin position="1"/>
        <end position="34"/>
    </location>
</feature>
<feature type="chain" id="PRO_0000034073" description="3-ketoacyl-CoA thiolase 2, peroxisomal">
    <location>
        <begin position="35"/>
        <end position="462"/>
    </location>
</feature>
<feature type="active site" description="Acyl-thioester intermediate" evidence="1">
    <location>
        <position position="138"/>
    </location>
</feature>
<feature type="active site" description="Proton acceptor" evidence="2">
    <location>
        <position position="393"/>
    </location>
</feature>
<feature type="active site" description="Proton acceptor" evidence="2">
    <location>
        <position position="425"/>
    </location>
</feature>
<feature type="disulfide bond" evidence="9 18 19">
    <location>
        <begin position="138"/>
        <end position="192"/>
    </location>
</feature>
<feature type="sequence conflict" description="In Ref. 2." evidence="16" ref="2">
    <original>P</original>
    <variation>F</variation>
    <location>
        <position position="17"/>
    </location>
</feature>
<feature type="strand" evidence="20">
    <location>
        <begin position="41"/>
        <end position="47"/>
    </location>
</feature>
<feature type="helix" evidence="21">
    <location>
        <begin position="48"/>
        <end position="50"/>
    </location>
</feature>
<feature type="strand" evidence="21">
    <location>
        <begin position="52"/>
        <end position="59"/>
    </location>
</feature>
<feature type="turn" evidence="21">
    <location>
        <begin position="65"/>
        <end position="67"/>
    </location>
</feature>
<feature type="turn" evidence="21">
    <location>
        <begin position="69"/>
        <end position="72"/>
    </location>
</feature>
<feature type="helix" evidence="21">
    <location>
        <begin position="75"/>
        <end position="90"/>
    </location>
</feature>
<feature type="helix" evidence="21">
    <location>
        <begin position="94"/>
        <end position="96"/>
    </location>
</feature>
<feature type="strand" evidence="21">
    <location>
        <begin position="100"/>
        <end position="103"/>
    </location>
</feature>
<feature type="strand" evidence="21">
    <location>
        <begin position="106"/>
        <end position="108"/>
    </location>
</feature>
<feature type="helix" evidence="21">
    <location>
        <begin position="109"/>
        <end position="122"/>
    </location>
</feature>
<feature type="strand" evidence="21">
    <location>
        <begin position="131"/>
        <end position="135"/>
    </location>
</feature>
<feature type="helix" evidence="21">
    <location>
        <begin position="137"/>
        <end position="139"/>
    </location>
</feature>
<feature type="helix" evidence="21">
    <location>
        <begin position="140"/>
        <end position="153"/>
    </location>
</feature>
<feature type="strand" evidence="21">
    <location>
        <begin position="158"/>
        <end position="167"/>
    </location>
</feature>
<feature type="turn" evidence="21">
    <location>
        <begin position="168"/>
        <end position="170"/>
    </location>
</feature>
<feature type="helix" evidence="21">
    <location>
        <begin position="181"/>
        <end position="185"/>
    </location>
</feature>
<feature type="helix" evidence="21">
    <location>
        <begin position="187"/>
        <end position="191"/>
    </location>
</feature>
<feature type="helix" evidence="21">
    <location>
        <begin position="196"/>
        <end position="207"/>
    </location>
</feature>
<feature type="helix" evidence="21">
    <location>
        <begin position="211"/>
        <end position="230"/>
    </location>
</feature>
<feature type="turn" evidence="21">
    <location>
        <begin position="231"/>
        <end position="237"/>
    </location>
</feature>
<feature type="strand" evidence="21">
    <location>
        <begin position="241"/>
        <end position="246"/>
    </location>
</feature>
<feature type="turn" evidence="21">
    <location>
        <begin position="248"/>
        <end position="250"/>
    </location>
</feature>
<feature type="strand" evidence="21">
    <location>
        <begin position="253"/>
        <end position="258"/>
    </location>
</feature>
<feature type="helix" evidence="21">
    <location>
        <begin position="270"/>
        <end position="274"/>
    </location>
</feature>
<feature type="strand" evidence="20">
    <location>
        <begin position="279"/>
        <end position="281"/>
    </location>
</feature>
<feature type="helix" evidence="21">
    <location>
        <begin position="288"/>
        <end position="290"/>
    </location>
</feature>
<feature type="strand" evidence="21">
    <location>
        <begin position="295"/>
        <end position="305"/>
    </location>
</feature>
<feature type="helix" evidence="21">
    <location>
        <begin position="306"/>
        <end position="312"/>
    </location>
</feature>
<feature type="strand" evidence="21">
    <location>
        <begin position="318"/>
        <end position="327"/>
    </location>
</feature>
<feature type="helix" evidence="21">
    <location>
        <begin position="330"/>
        <end position="335"/>
    </location>
</feature>
<feature type="helix" evidence="21">
    <location>
        <begin position="336"/>
        <end position="347"/>
    </location>
</feature>
<feature type="helix" evidence="21">
    <location>
        <begin position="352"/>
        <end position="354"/>
    </location>
</feature>
<feature type="strand" evidence="21">
    <location>
        <begin position="357"/>
        <end position="360"/>
    </location>
</feature>
<feature type="helix" evidence="21">
    <location>
        <begin position="365"/>
        <end position="375"/>
    </location>
</feature>
<feature type="helix" evidence="21">
    <location>
        <begin position="379"/>
        <end position="381"/>
    </location>
</feature>
<feature type="helix" evidence="21">
    <location>
        <begin position="388"/>
        <end position="391"/>
    </location>
</feature>
<feature type="helix" evidence="21">
    <location>
        <begin position="397"/>
        <end position="413"/>
    </location>
</feature>
<feature type="strand" evidence="21">
    <location>
        <begin position="419"/>
        <end position="426"/>
    </location>
</feature>
<feature type="turn" evidence="21">
    <location>
        <begin position="427"/>
        <end position="429"/>
    </location>
</feature>
<feature type="strand" evidence="21">
    <location>
        <begin position="430"/>
        <end position="438"/>
    </location>
</feature>
<feature type="helix" evidence="21">
    <location>
        <begin position="441"/>
        <end position="446"/>
    </location>
</feature>
<comment type="function">
    <text evidence="5 6 7 8 14 15">Involved in long chain fatty-acid beta-oxidation prior to gluconeogenesis during germination and subsequent seedling growth. Confers sensitivity to 2,4-dichlorophenoxybutiric acid (2,4-DB). Required for local and systemic induction of jasmonic acid (JA) biosynthesis after wounding. Seems to be involved in JA biosynthesis during senescence (PubMed:11696182, PubMed:11891244, PubMed:15141068, PubMed:15979881, PubMed:9490742). May be involved in the positive regulation of abscisic acid-activated signaling pathway (PubMed:21257607).</text>
</comment>
<comment type="catalytic activity">
    <reaction evidence="5">
        <text>an acyl-CoA + acetyl-CoA = a 3-oxoacyl-CoA + CoA</text>
        <dbReference type="Rhea" id="RHEA:21564"/>
        <dbReference type="ChEBI" id="CHEBI:57287"/>
        <dbReference type="ChEBI" id="CHEBI:57288"/>
        <dbReference type="ChEBI" id="CHEBI:58342"/>
        <dbReference type="ChEBI" id="CHEBI:90726"/>
        <dbReference type="EC" id="2.3.1.16"/>
    </reaction>
    <physiologicalReaction direction="left-to-right" evidence="17">
        <dbReference type="Rhea" id="RHEA:21565"/>
    </physiologicalReaction>
</comment>
<comment type="biophysicochemical properties">
    <kinetics>
        <KM evidence="5">77.5 uM for acetoacetyl-CoA (at 25 degrees Celsius)</KM>
        <Vmax evidence="5">5000.0 nmol/min/mg enzyme (at 25 degrees Celsius)</Vmax>
    </kinetics>
</comment>
<comment type="pathway">
    <text>Lipid metabolism; fatty acid metabolism.</text>
</comment>
<comment type="subunit">
    <text evidence="9 13">Forms homodimers.</text>
</comment>
<comment type="interaction">
    <interactant intactId="EBI-4468126">
        <id>Q56WD9</id>
    </interactant>
    <interactant intactId="EBI-9536794">
        <id>Q9XF57</id>
        <label>PEX7</label>
    </interactant>
    <organismsDiffer>false</organismsDiffer>
    <experiments>3</experiments>
</comment>
<comment type="subcellular location">
    <subcellularLocation>
        <location evidence="10 15">Peroxisome</location>
    </subcellularLocation>
    <subcellularLocation>
        <location evidence="15">Glyoxysome</location>
    </subcellularLocation>
    <text evidence="10 15">Peroxisomal targeting signal type 2 (PTS2-type) import is temperature and ATP-dependent, induced by zinc ions and PTS1-type import, but repressed by mature forms of PED1 (PubMed:9490742). Does not seem to be targeted to mitochondria (PubMed:17120136).</text>
</comment>
<comment type="tissue specificity">
    <text evidence="3 5 7 15">Accumulates in etiolated cotyledons and in seedlings, also present in roots, flowers and siliques (at protein level). High levels in wounded leaves.</text>
</comment>
<comment type="developmental stage">
    <text evidence="4 5 6">Levels increase strongly upon imbibition and decrease 3 days later. Strongly induced in leaves during senescence.</text>
</comment>
<comment type="induction">
    <text evidence="3 7 12 15">Expressed in the dark, repressed by light (at protein level). Induced by dehydration, by abscisic acid (ABA) and by wounding, both locally and systemically (PubMed:10212254, PubMed:15141068, PubMed:9490742). Induced by natural and dark-induced leaf senescence (PubMed:18441338).</text>
</comment>
<comment type="disruption phenotype">
    <text evidence="11 15">Defects in peroxisomal fatty acid beta-oxidation affecting germination and seedling growth (PubMed:9490742). Etiolated cotyledons, which exhibit glyoxysomes with abnormal morphology (PubMed:9490742). Increased number of siliques with small size and reduced seed number caused by increased ovule abortion (PubMed:17728299).</text>
</comment>
<comment type="miscellaneous">
    <text evidence="12">Plants silencing PDE1/KAT2 are defective in the wound-induced synthesis of jasmonate and exhibit delayed senescence both in natural and dark-induced processes.</text>
</comment>
<comment type="similarity">
    <text evidence="16">Belongs to the thiolase-like superfamily. Thiolase family.</text>
</comment>
<comment type="sequence caution" evidence="16">
    <conflict type="frameshift">
        <sequence resource="EMBL-CDS" id="AAL25590"/>
    </conflict>
</comment>
<reference key="1">
    <citation type="journal article" date="1998" name="Plant Cell">
        <title>2,4-Dichlorophenoxybutyric acid-resistant mutants of Arabidopsis have defects in glyoxysomal fatty acid beta-oxidation.</title>
        <authorList>
            <person name="Hayashi M."/>
            <person name="Toriyama K."/>
            <person name="Kondo M."/>
            <person name="Nishimura M."/>
        </authorList>
    </citation>
    <scope>NUCLEOTIDE SEQUENCE [GENOMIC DNA / MRNA]</scope>
    <scope>FUNCTION</scope>
    <scope>INDUCTION</scope>
    <scope>TISSUE SPECIFICITY</scope>
    <scope>SUBCELLULAR LOCATION</scope>
    <scope>DISRUPTION PHENOTYPE</scope>
    <source>
        <strain>cv. Columbia</strain>
        <strain>cv. Landsberg erecta</strain>
    </source>
</reference>
<reference key="2">
    <citation type="journal article" date="2003" name="Plant Physiol.">
        <title>Import of the peroxisomal targeting signal type 2 protein 3-ketoacyl-coenzyme A thiolase into glyoxysomes.</title>
        <authorList>
            <person name="Johnson T.L."/>
            <person name="Olsen L.J."/>
        </authorList>
    </citation>
    <scope>NUCLEOTIDE SEQUENCE [MRNA]</scope>
    <scope>SUBCELLULAR LOCATION</scope>
    <scope>PTS2-TYPE IMPORT</scope>
</reference>
<reference key="3">
    <citation type="journal article" date="1999" name="Nature">
        <title>Sequence and analysis of chromosome 2 of the plant Arabidopsis thaliana.</title>
        <authorList>
            <person name="Lin X."/>
            <person name="Kaul S."/>
            <person name="Rounsley S.D."/>
            <person name="Shea T.P."/>
            <person name="Benito M.-I."/>
            <person name="Town C.D."/>
            <person name="Fujii C.Y."/>
            <person name="Mason T.M."/>
            <person name="Bowman C.L."/>
            <person name="Barnstead M.E."/>
            <person name="Feldblyum T.V."/>
            <person name="Buell C.R."/>
            <person name="Ketchum K.A."/>
            <person name="Lee J.J."/>
            <person name="Ronning C.M."/>
            <person name="Koo H.L."/>
            <person name="Moffat K.S."/>
            <person name="Cronin L.A."/>
            <person name="Shen M."/>
            <person name="Pai G."/>
            <person name="Van Aken S."/>
            <person name="Umayam L."/>
            <person name="Tallon L.J."/>
            <person name="Gill J.E."/>
            <person name="Adams M.D."/>
            <person name="Carrera A.J."/>
            <person name="Creasy T.H."/>
            <person name="Goodman H.M."/>
            <person name="Somerville C.R."/>
            <person name="Copenhaver G.P."/>
            <person name="Preuss D."/>
            <person name="Nierman W.C."/>
            <person name="White O."/>
            <person name="Eisen J.A."/>
            <person name="Salzberg S.L."/>
            <person name="Fraser C.M."/>
            <person name="Venter J.C."/>
        </authorList>
    </citation>
    <scope>NUCLEOTIDE SEQUENCE [LARGE SCALE GENOMIC DNA]</scope>
    <source>
        <strain>cv. Columbia</strain>
    </source>
</reference>
<reference key="4">
    <citation type="journal article" date="2017" name="Plant J.">
        <title>Araport11: a complete reannotation of the Arabidopsis thaliana reference genome.</title>
        <authorList>
            <person name="Cheng C.Y."/>
            <person name="Krishnakumar V."/>
            <person name="Chan A.P."/>
            <person name="Thibaud-Nissen F."/>
            <person name="Schobel S."/>
            <person name="Town C.D."/>
        </authorList>
    </citation>
    <scope>GENOME REANNOTATION</scope>
    <source>
        <strain>cv. Columbia</strain>
    </source>
</reference>
<reference key="5">
    <citation type="journal article" date="2003" name="Science">
        <title>Empirical analysis of transcriptional activity in the Arabidopsis genome.</title>
        <authorList>
            <person name="Yamada K."/>
            <person name="Lim J."/>
            <person name="Dale J.M."/>
            <person name="Chen H."/>
            <person name="Shinn P."/>
            <person name="Palm C.J."/>
            <person name="Southwick A.M."/>
            <person name="Wu H.C."/>
            <person name="Kim C.J."/>
            <person name="Nguyen M."/>
            <person name="Pham P.K."/>
            <person name="Cheuk R.F."/>
            <person name="Karlin-Newmann G."/>
            <person name="Liu S.X."/>
            <person name="Lam B."/>
            <person name="Sakano H."/>
            <person name="Wu T."/>
            <person name="Yu G."/>
            <person name="Miranda M."/>
            <person name="Quach H.L."/>
            <person name="Tripp M."/>
            <person name="Chang C.H."/>
            <person name="Lee J.M."/>
            <person name="Toriumi M.J."/>
            <person name="Chan M.M."/>
            <person name="Tang C.C."/>
            <person name="Onodera C.S."/>
            <person name="Deng J.M."/>
            <person name="Akiyama K."/>
            <person name="Ansari Y."/>
            <person name="Arakawa T."/>
            <person name="Banh J."/>
            <person name="Banno F."/>
            <person name="Bowser L."/>
            <person name="Brooks S.Y."/>
            <person name="Carninci P."/>
            <person name="Chao Q."/>
            <person name="Choy N."/>
            <person name="Enju A."/>
            <person name="Goldsmith A.D."/>
            <person name="Gurjal M."/>
            <person name="Hansen N.F."/>
            <person name="Hayashizaki Y."/>
            <person name="Johnson-Hopson C."/>
            <person name="Hsuan V.W."/>
            <person name="Iida K."/>
            <person name="Karnes M."/>
            <person name="Khan S."/>
            <person name="Koesema E."/>
            <person name="Ishida J."/>
            <person name="Jiang P.X."/>
            <person name="Jones T."/>
            <person name="Kawai J."/>
            <person name="Kamiya A."/>
            <person name="Meyers C."/>
            <person name="Nakajima M."/>
            <person name="Narusaka M."/>
            <person name="Seki M."/>
            <person name="Sakurai T."/>
            <person name="Satou M."/>
            <person name="Tamse R."/>
            <person name="Vaysberg M."/>
            <person name="Wallender E.K."/>
            <person name="Wong C."/>
            <person name="Yamamura Y."/>
            <person name="Yuan S."/>
            <person name="Shinozaki K."/>
            <person name="Davis R.W."/>
            <person name="Theologis A."/>
            <person name="Ecker J.R."/>
        </authorList>
    </citation>
    <scope>NUCLEOTIDE SEQUENCE [LARGE SCALE MRNA]</scope>
    <source>
        <strain>cv. Columbia</strain>
    </source>
</reference>
<reference key="6">
    <citation type="submission" date="2002-03" db="EMBL/GenBank/DDBJ databases">
        <title>Full-length cDNA from Arabidopsis thaliana.</title>
        <authorList>
            <person name="Brover V.V."/>
            <person name="Troukhan M.E."/>
            <person name="Alexandrov N.A."/>
            <person name="Lu Y.-P."/>
            <person name="Flavell R.B."/>
            <person name="Feldmann K.A."/>
        </authorList>
    </citation>
    <scope>NUCLEOTIDE SEQUENCE [LARGE SCALE MRNA]</scope>
</reference>
<reference key="7">
    <citation type="submission" date="2005-03" db="EMBL/GenBank/DDBJ databases">
        <title>Large-scale analysis of RIKEN Arabidopsis full-length (RAFL) cDNAs.</title>
        <authorList>
            <person name="Totoki Y."/>
            <person name="Seki M."/>
            <person name="Ishida J."/>
            <person name="Nakajima M."/>
            <person name="Enju A."/>
            <person name="Kamiya A."/>
            <person name="Narusaka M."/>
            <person name="Shin-i T."/>
            <person name="Nakagawa M."/>
            <person name="Sakamoto N."/>
            <person name="Oishi K."/>
            <person name="Kohara Y."/>
            <person name="Kobayashi M."/>
            <person name="Toyoda A."/>
            <person name="Sakaki Y."/>
            <person name="Sakurai T."/>
            <person name="Iida K."/>
            <person name="Akiyama K."/>
            <person name="Satou M."/>
            <person name="Toyoda T."/>
            <person name="Konagaya A."/>
            <person name="Carninci P."/>
            <person name="Kawai J."/>
            <person name="Hayashizaki Y."/>
            <person name="Shinozaki K."/>
        </authorList>
    </citation>
    <scope>NUCLEOTIDE SEQUENCE [LARGE SCALE MRNA] OF 120-462</scope>
    <source>
        <strain>cv. Columbia</strain>
    </source>
</reference>
<reference key="8">
    <citation type="journal article" date="1999" name="J. Biol. Chem.">
        <title>A novel acyl-CoA oxidase that can oxidize short-chain acyl-CoA in plant peroxisomes.</title>
        <authorList>
            <person name="Hayashi H."/>
            <person name="De Bellis L."/>
            <person name="Ciurli A."/>
            <person name="Kondo M."/>
            <person name="Hayashi M."/>
            <person name="Nishimura M."/>
        </authorList>
    </citation>
    <scope>TISSUE SPECIFICITY</scope>
    <scope>INDUCTION</scope>
</reference>
<reference key="9">
    <citation type="journal article" date="2001" name="Biochem. Soc. Trans.">
        <title>Co-ordinate regulation of genes involved in storage lipid mobilization in Arabidopsis thaliana.</title>
        <authorList>
            <person name="Rylott E.L."/>
            <person name="Hooks M.A."/>
            <person name="Graham I.A."/>
        </authorList>
    </citation>
    <scope>DEVELOPMENTAL STAGE</scope>
</reference>
<reference key="10">
    <citation type="journal article" date="2001" name="Plant J.">
        <title>Requirement for 3-ketoacyl-CoA thiolase-2 in peroxisome development, fatty acid beta-oxidation and breakdown of triacylglycerol in lipid bodies of Arabidopsis seedlings.</title>
        <authorList>
            <person name="Germain V."/>
            <person name="Rylott E.L."/>
            <person name="Larson T.R."/>
            <person name="Sherson S.M."/>
            <person name="Bechtold N."/>
            <person name="Carde J.-P."/>
            <person name="Bryce J.H."/>
            <person name="Graham I.A."/>
            <person name="Smith S.M."/>
        </authorList>
    </citation>
    <scope>FUNCTION</scope>
    <scope>CATALYTIC ACTIVITY</scope>
    <scope>BIOPHYSICOCHEMICAL PROPERTIES</scope>
    <scope>TISSUE SPECIFICITY</scope>
    <scope>DEVELOPMENTAL STAGE</scope>
</reference>
<reference key="11">
    <citation type="journal article" date="2002" name="Plant Physiol.">
        <title>Evidence supporting a role of jasmonic acid in Arabidopsis leaf senescence.</title>
        <authorList>
            <person name="He Y."/>
            <person name="Fukushige H."/>
            <person name="Hildebrand D.F."/>
            <person name="Gan S."/>
        </authorList>
    </citation>
    <scope>FUNCTION</scope>
    <scope>DEVELOPMENTAL STAGE</scope>
</reference>
<reference key="12">
    <citation type="journal article" date="2004" name="Plant Physiol.">
        <title>Gene-specific involvement of beta-oxidation in wound-activated responses in Arabidopsis.</title>
        <authorList>
            <person name="Cruz-Castillo M."/>
            <person name="Martinez C."/>
            <person name="Buchala A."/>
            <person name="Metraux J.-P."/>
            <person name="Leon J."/>
        </authorList>
    </citation>
    <scope>FUNCTION</scope>
    <scope>TISSUE SPECIFICITY</scope>
    <scope>INDUCTION</scope>
</reference>
<reference key="13">
    <citation type="journal article" date="2005" name="Plant Physiol. Biochem.">
        <title>A defect in glyoxysomal fatty acid beta-oxidation reduces jasmonic acid accumulation in Arabidopsis.</title>
        <authorList>
            <person name="Afitlhile M.M."/>
            <person name="Fukushige H."/>
            <person name="Nishimura M."/>
            <person name="Hildebrand D.F."/>
        </authorList>
    </citation>
    <scope>FUNCTION</scope>
</reference>
<reference key="14">
    <citation type="journal article" date="2007" name="Plant Cell">
        <title>Proteome analysis of Arabidopsis leaf peroxisomes reveals novel targeting peptides, metabolic pathways, and defense mechanisms.</title>
        <authorList>
            <person name="Reumann S."/>
            <person name="Babujee L."/>
            <person name="Ma C."/>
            <person name="Wienkoop S."/>
            <person name="Siemsen T."/>
            <person name="Antonicelli G.E."/>
            <person name="Rasche N."/>
            <person name="Lueder F."/>
            <person name="Weckwerth W."/>
            <person name="Jahn O."/>
        </authorList>
    </citation>
    <scope>IDENTIFICATION BY MASS SPECTROMETRY</scope>
</reference>
<reference key="15">
    <citation type="journal article" date="2007" name="Plant Mol. Biol.">
        <title>Nine 3-ketoacyl-CoA thiolases (KATs) and acetoacetyl-CoA thiolases (ACATs) encoded by five genes in Arabidopsis thaliana are targeted either to peroxisomes or cytosol but not to mitochondria.</title>
        <authorList>
            <person name="Carrie C."/>
            <person name="Murcha M.W."/>
            <person name="Millar A.H."/>
            <person name="Smith S.M."/>
            <person name="Whelan J."/>
        </authorList>
    </citation>
    <scope>SUBCELLULAR LOCATION</scope>
</reference>
<reference key="16">
    <citation type="journal article" date="2007" name="J. Exp. Bot.">
        <title>The Arabidopsis 3-ketoacyl-CoA thiolase-2 (kat2-1) mutant exhibits increased flowering but reduced reproductive success.</title>
        <authorList>
            <person name="Footitt S."/>
            <person name="Cornah J.E."/>
            <person name="Pracharoenwattana I."/>
            <person name="Bryce J.H."/>
            <person name="Smith S.M."/>
        </authorList>
    </citation>
    <scope>DISRUPTION PHENOTYPE</scope>
</reference>
<reference key="17">
    <citation type="journal article" date="2008" name="J. Exp. Bot.">
        <title>Expression of the beta-oxidation gene 3-ketoacyl-CoA thiolase 2 (KAT2) is required for the timely onset of natural and dark-induced leaf senescence in Arabidopsis.</title>
        <authorList>
            <person name="Castillo M.C."/>
            <person name="Leon J."/>
        </authorList>
    </citation>
    <scope>INDUCTION</scope>
</reference>
<reference key="18">
    <citation type="journal article" date="2011" name="Plant Cell Physiol.">
        <title>Arabidopsis 3-ketoacyl-CoA thiolase-2 (KAT2), an enzyme of fatty acid beta-oxidation, is involved in ABA signal transduction.</title>
        <authorList>
            <person name="Jiang T."/>
            <person name="Zhang X.F."/>
            <person name="Wang X.F."/>
            <person name="Zhang D.P."/>
        </authorList>
    </citation>
    <scope>FUNCTION</scope>
</reference>
<reference key="19">
    <citation type="journal article" date="2006" name="J. Mol. Biol.">
        <title>The crystal structure of a plant 3-ketoacyl-CoA thiolase reveals the potential for redox control of peroxisomal fatty acid beta-oxidation.</title>
        <authorList>
            <person name="Sundaramoorthy R."/>
            <person name="Micossi E."/>
            <person name="Alphey M.S."/>
            <person name="Germain V."/>
            <person name="Bryce J.H."/>
            <person name="Smith S.M."/>
            <person name="Leonard G.A."/>
            <person name="Hunter W.N."/>
        </authorList>
    </citation>
    <scope>X-RAY CRYSTALLOGRAPHY (2.1 ANGSTROMS) OF 38-441</scope>
    <scope>SUBUNIT</scope>
    <scope>DISULFIDE BOND</scope>
</reference>
<reference key="20">
    <citation type="journal article" date="2010" name="J. Biol. Chem.">
        <title>Peroxisomal plant 3-ketoacyl-CoA thiolase structure and activity are regulated by a sensitive redox switch.</title>
        <authorList>
            <person name="Pye V.E."/>
            <person name="Christensen C.E."/>
            <person name="Dyer J.H."/>
            <person name="Arent S."/>
            <person name="Henriksen A."/>
        </authorList>
    </citation>
    <scope>X-RAY CRYSTALLOGRAPHY (1.50 ANGSTROMS) OF 36-462</scope>
    <scope>SUBUNIT</scope>
</reference>
<evidence type="ECO:0000250" key="1"/>
<evidence type="ECO:0000255" key="2">
    <source>
        <dbReference type="PROSITE-ProRule" id="PRU10020"/>
    </source>
</evidence>
<evidence type="ECO:0000269" key="3">
    <source>
    </source>
</evidence>
<evidence type="ECO:0000269" key="4">
    <source>
    </source>
</evidence>
<evidence type="ECO:0000269" key="5">
    <source>
    </source>
</evidence>
<evidence type="ECO:0000269" key="6">
    <source>
    </source>
</evidence>
<evidence type="ECO:0000269" key="7">
    <source>
    </source>
</evidence>
<evidence type="ECO:0000269" key="8">
    <source>
    </source>
</evidence>
<evidence type="ECO:0000269" key="9">
    <source>
    </source>
</evidence>
<evidence type="ECO:0000269" key="10">
    <source>
    </source>
</evidence>
<evidence type="ECO:0000269" key="11">
    <source>
    </source>
</evidence>
<evidence type="ECO:0000269" key="12">
    <source>
    </source>
</evidence>
<evidence type="ECO:0000269" key="13">
    <source>
    </source>
</evidence>
<evidence type="ECO:0000269" key="14">
    <source>
    </source>
</evidence>
<evidence type="ECO:0000269" key="15">
    <source>
    </source>
</evidence>
<evidence type="ECO:0000305" key="16"/>
<evidence type="ECO:0000305" key="17">
    <source>
    </source>
</evidence>
<evidence type="ECO:0007744" key="18">
    <source>
        <dbReference type="PDB" id="2C7Y"/>
    </source>
</evidence>
<evidence type="ECO:0007744" key="19">
    <source>
        <dbReference type="PDB" id="2C7Z"/>
    </source>
</evidence>
<evidence type="ECO:0007829" key="20">
    <source>
        <dbReference type="PDB" id="2C7Y"/>
    </source>
</evidence>
<evidence type="ECO:0007829" key="21">
    <source>
        <dbReference type="PDB" id="2WU9"/>
    </source>
</evidence>